<proteinExistence type="inferred from homology"/>
<reference key="1">
    <citation type="journal article" date="2005" name="Science">
        <title>The genome of the basidiomycetous yeast and human pathogen Cryptococcus neoformans.</title>
        <authorList>
            <person name="Loftus B.J."/>
            <person name="Fung E."/>
            <person name="Roncaglia P."/>
            <person name="Rowley D."/>
            <person name="Amedeo P."/>
            <person name="Bruno D."/>
            <person name="Vamathevan J."/>
            <person name="Miranda M."/>
            <person name="Anderson I.J."/>
            <person name="Fraser J.A."/>
            <person name="Allen J.E."/>
            <person name="Bosdet I.E."/>
            <person name="Brent M.R."/>
            <person name="Chiu R."/>
            <person name="Doering T.L."/>
            <person name="Donlin M.J."/>
            <person name="D'Souza C.A."/>
            <person name="Fox D.S."/>
            <person name="Grinberg V."/>
            <person name="Fu J."/>
            <person name="Fukushima M."/>
            <person name="Haas B.J."/>
            <person name="Huang J.C."/>
            <person name="Janbon G."/>
            <person name="Jones S.J.M."/>
            <person name="Koo H.L."/>
            <person name="Krzywinski M.I."/>
            <person name="Kwon-Chung K.J."/>
            <person name="Lengeler K.B."/>
            <person name="Maiti R."/>
            <person name="Marra M.A."/>
            <person name="Marra R.E."/>
            <person name="Mathewson C.A."/>
            <person name="Mitchell T.G."/>
            <person name="Pertea M."/>
            <person name="Riggs F.R."/>
            <person name="Salzberg S.L."/>
            <person name="Schein J.E."/>
            <person name="Shvartsbeyn A."/>
            <person name="Shin H."/>
            <person name="Shumway M."/>
            <person name="Specht C.A."/>
            <person name="Suh B.B."/>
            <person name="Tenney A."/>
            <person name="Utterback T.R."/>
            <person name="Wickes B.L."/>
            <person name="Wortman J.R."/>
            <person name="Wye N.H."/>
            <person name="Kronstad J.W."/>
            <person name="Lodge J.K."/>
            <person name="Heitman J."/>
            <person name="Davis R.W."/>
            <person name="Fraser C.M."/>
            <person name="Hyman R.W."/>
        </authorList>
    </citation>
    <scope>NUCLEOTIDE SEQUENCE [LARGE SCALE GENOMIC DNA]</scope>
    <source>
        <strain>JEC21 / ATCC MYA-565</strain>
    </source>
</reference>
<organism>
    <name type="scientific">Cryptococcus neoformans var. neoformans serotype D (strain JEC21 / ATCC MYA-565)</name>
    <name type="common">Filobasidiella neoformans</name>
    <dbReference type="NCBI Taxonomy" id="214684"/>
    <lineage>
        <taxon>Eukaryota</taxon>
        <taxon>Fungi</taxon>
        <taxon>Dikarya</taxon>
        <taxon>Basidiomycota</taxon>
        <taxon>Agaricomycotina</taxon>
        <taxon>Tremellomycetes</taxon>
        <taxon>Tremellales</taxon>
        <taxon>Cryptococcaceae</taxon>
        <taxon>Cryptococcus</taxon>
        <taxon>Cryptococcus neoformans species complex</taxon>
    </lineage>
</organism>
<evidence type="ECO:0000250" key="1"/>
<evidence type="ECO:0000255" key="2">
    <source>
        <dbReference type="PROSITE-ProRule" id="PRU00147"/>
    </source>
</evidence>
<evidence type="ECO:0000256" key="3">
    <source>
        <dbReference type="SAM" id="MobiDB-lite"/>
    </source>
</evidence>
<evidence type="ECO:0000305" key="4"/>
<dbReference type="EMBL" id="AE017346">
    <property type="protein sequence ID" value="AAW44300.2"/>
    <property type="molecule type" value="Genomic_DNA"/>
</dbReference>
<dbReference type="RefSeq" id="XP_571607.1">
    <property type="nucleotide sequence ID" value="XM_571607.1"/>
</dbReference>
<dbReference type="SMR" id="P0CR60"/>
<dbReference type="FunCoup" id="P0CR60">
    <property type="interactions" value="198"/>
</dbReference>
<dbReference type="STRING" id="214684.P0CR60"/>
<dbReference type="PaxDb" id="214684-P0CR60"/>
<dbReference type="eggNOG" id="KOG2527">
    <property type="taxonomic scope" value="Eukaryota"/>
</dbReference>
<dbReference type="HOGENOM" id="CLU_057172_2_2_1"/>
<dbReference type="InParanoid" id="P0CR60"/>
<dbReference type="Proteomes" id="UP000002149">
    <property type="component" value="Chromosome 6"/>
</dbReference>
<dbReference type="GO" id="GO:0031901">
    <property type="term" value="C:early endosome membrane"/>
    <property type="evidence" value="ECO:0000318"/>
    <property type="project" value="GO_Central"/>
</dbReference>
<dbReference type="GO" id="GO:0000139">
    <property type="term" value="C:Golgi membrane"/>
    <property type="evidence" value="ECO:0007669"/>
    <property type="project" value="UniProtKB-SubCell"/>
</dbReference>
<dbReference type="GO" id="GO:0030904">
    <property type="term" value="C:retromer complex"/>
    <property type="evidence" value="ECO:0000318"/>
    <property type="project" value="GO_Central"/>
</dbReference>
<dbReference type="GO" id="GO:0032266">
    <property type="term" value="F:phosphatidylinositol-3-phosphate binding"/>
    <property type="evidence" value="ECO:0000318"/>
    <property type="project" value="GO_Central"/>
</dbReference>
<dbReference type="GO" id="GO:0032456">
    <property type="term" value="P:endocytic recycling"/>
    <property type="evidence" value="ECO:0000318"/>
    <property type="project" value="GO_Central"/>
</dbReference>
<dbReference type="GO" id="GO:0034499">
    <property type="term" value="P:late endosome to Golgi transport"/>
    <property type="evidence" value="ECO:0000318"/>
    <property type="project" value="GO_Central"/>
</dbReference>
<dbReference type="GO" id="GO:0015031">
    <property type="term" value="P:protein transport"/>
    <property type="evidence" value="ECO:0007669"/>
    <property type="project" value="UniProtKB-KW"/>
</dbReference>
<dbReference type="CDD" id="cd07295">
    <property type="entry name" value="PX_Grd19"/>
    <property type="match status" value="1"/>
</dbReference>
<dbReference type="FunFam" id="3.30.1520.10:FF:000030">
    <property type="entry name" value="Sorting nexin-3, variant"/>
    <property type="match status" value="1"/>
</dbReference>
<dbReference type="Gene3D" id="3.30.1520.10">
    <property type="entry name" value="Phox-like domain"/>
    <property type="match status" value="1"/>
</dbReference>
<dbReference type="InterPro" id="IPR001683">
    <property type="entry name" value="PX_dom"/>
</dbReference>
<dbReference type="InterPro" id="IPR036871">
    <property type="entry name" value="PX_dom_sf"/>
</dbReference>
<dbReference type="InterPro" id="IPR042138">
    <property type="entry name" value="PX_Grd19_PX"/>
</dbReference>
<dbReference type="InterPro" id="IPR051074">
    <property type="entry name" value="Sorting_Nexin"/>
</dbReference>
<dbReference type="PANTHER" id="PTHR45963">
    <property type="entry name" value="RE52028P"/>
    <property type="match status" value="1"/>
</dbReference>
<dbReference type="PANTHER" id="PTHR45963:SF2">
    <property type="entry name" value="RE52028P"/>
    <property type="match status" value="1"/>
</dbReference>
<dbReference type="Pfam" id="PF00787">
    <property type="entry name" value="PX"/>
    <property type="match status" value="1"/>
</dbReference>
<dbReference type="SMART" id="SM00312">
    <property type="entry name" value="PX"/>
    <property type="match status" value="1"/>
</dbReference>
<dbReference type="SUPFAM" id="SSF81995">
    <property type="entry name" value="beta-sandwich domain of Sec23/24"/>
    <property type="match status" value="1"/>
</dbReference>
<dbReference type="SUPFAM" id="SSF64268">
    <property type="entry name" value="PX domain"/>
    <property type="match status" value="1"/>
</dbReference>
<dbReference type="PROSITE" id="PS50195">
    <property type="entry name" value="PX"/>
    <property type="match status" value="1"/>
</dbReference>
<name>SNX3_CRYNJ</name>
<feature type="chain" id="PRO_0000238586" description="Sorting nexin-3">
    <location>
        <begin position="1"/>
        <end position="240"/>
    </location>
</feature>
<feature type="domain" description="PX" evidence="2">
    <location>
        <begin position="118"/>
        <end position="235"/>
    </location>
</feature>
<feature type="region of interest" description="Disordered" evidence="3">
    <location>
        <begin position="1"/>
        <end position="85"/>
    </location>
</feature>
<feature type="compositionally biased region" description="Pro residues" evidence="3">
    <location>
        <begin position="22"/>
        <end position="33"/>
    </location>
</feature>
<feature type="compositionally biased region" description="Low complexity" evidence="3">
    <location>
        <begin position="34"/>
        <end position="54"/>
    </location>
</feature>
<feature type="compositionally biased region" description="Low complexity" evidence="3">
    <location>
        <begin position="62"/>
        <end position="84"/>
    </location>
</feature>
<feature type="binding site" evidence="1">
    <location>
        <position position="161"/>
    </location>
    <ligand>
        <name>a 1,2-diacyl-sn-glycero-3-phospho-(1D-myo-inositol-3-phosphate)</name>
        <dbReference type="ChEBI" id="CHEBI:58088"/>
    </ligand>
</feature>
<feature type="binding site" evidence="1">
    <location>
        <position position="163"/>
    </location>
    <ligand>
        <name>a 1,2-diacyl-sn-glycero-3-phospho-(1D-myo-inositol-3-phosphate)</name>
        <dbReference type="ChEBI" id="CHEBI:58088"/>
    </ligand>
</feature>
<feature type="binding site" evidence="1">
    <location>
        <position position="187"/>
    </location>
    <ligand>
        <name>a 1,2-diacyl-sn-glycero-3-phospho-(1D-myo-inositol-3-phosphate)</name>
        <dbReference type="ChEBI" id="CHEBI:58088"/>
    </ligand>
</feature>
<feature type="binding site" evidence="1">
    <location>
        <position position="192"/>
    </location>
    <ligand>
        <name>a 1,2-diacyl-sn-glycero-3-phospho-(1D-myo-inositol-3-phosphate)</name>
        <dbReference type="ChEBI" id="CHEBI:58088"/>
    </ligand>
</feature>
<feature type="binding site" evidence="1">
    <location>
        <position position="201"/>
    </location>
    <ligand>
        <name>a 1,2-diacyl-sn-glycero-3-phospho-(1D-myo-inositol-3-phosphate)</name>
        <dbReference type="ChEBI" id="CHEBI:58088"/>
    </ligand>
</feature>
<sequence>MSAYPQDTYFNSNPYQQQPYAYQPPPQPQPQQPPYQQQPYQQQAYQYNAQQPYQTTDPYAYQQSPPQSSTVPPQSPPVQVTHSPFIRTDSSQAVSFTDMARMAGRPQTFDEMYSVPESFLEIEIRNPMTHGIGRKMYTDYEIVCMTNIPAFKLRHSAVRRRYSDFEAFRDILERESTRVNIPPLPGKVFTNRFSDEVIEQRREGLQRFLEIVAGHPLLQTGSKVLCAFLQDPAWDKSQWI</sequence>
<protein>
    <recommendedName>
        <fullName>Sorting nexin-3</fullName>
    </recommendedName>
</protein>
<comment type="function">
    <text evidence="1">Required for retention of late Golgi membrane proteins. Component of the retrieval machinery that functions by direct interaction with the cytosolic tails of certain TGN membrane proteins during the sorting/budding process at the prevacuolar compartment. Binds phosphatidylinositol 3-phosphate (PtdIns(P3)) (By similarity).</text>
</comment>
<comment type="subcellular location">
    <subcellularLocation>
        <location evidence="1">Cytoplasm</location>
    </subcellularLocation>
    <subcellularLocation>
        <location evidence="4">Golgi apparatus membrane</location>
        <topology evidence="4">Peripheral membrane protein</topology>
        <orientation evidence="4">Cytoplasmic side</orientation>
    </subcellularLocation>
    <subcellularLocation>
        <location evidence="4">Prevacuolar compartment membrane</location>
        <topology evidence="4">Peripheral membrane protein</topology>
        <orientation evidence="4">Cytoplasmic side</orientation>
    </subcellularLocation>
</comment>
<comment type="domain">
    <text evidence="1">The PX domain binds phosphatidylinositol 3-phosphate which is necessary for peripheral membrane localization.</text>
</comment>
<comment type="similarity">
    <text evidence="4">Belongs to the sorting nexin family.</text>
</comment>
<gene>
    <name type="primary">SNX3</name>
    <name type="ordered locus">CNF02650</name>
</gene>
<accession>P0CR60</accession>
<accession>Q55QY4</accession>
<accession>Q5KF84</accession>
<keyword id="KW-0963">Cytoplasm</keyword>
<keyword id="KW-0333">Golgi apparatus</keyword>
<keyword id="KW-0446">Lipid-binding</keyword>
<keyword id="KW-0472">Membrane</keyword>
<keyword id="KW-0653">Protein transport</keyword>
<keyword id="KW-1185">Reference proteome</keyword>
<keyword id="KW-0813">Transport</keyword>